<proteinExistence type="inferred from homology"/>
<evidence type="ECO:0000250" key="1"/>
<evidence type="ECO:0000305" key="2"/>
<sequence length="219" mass="23373">MHRKGAIGIGTLIVFIAMVLVAAVAAGVIIGTAGYLQQKAQATGMQTTQEVSSGIKIINIYGYVNSSVPSNGTITKMAIFVSPNAGSGGISLSNVKIVLSDGKKLVVYNYSKGLLYDKQISDLFNDSIVTIWNNITDTTFGIAVINDSGNKMDKDYPNLEWGDTVALLLRTTVFETEDNRRGIGPGTRIVGKVIPEVGAAGVIDFTTPSTYNYRVMVLQ</sequence>
<gene>
    <name type="primary">flaB4</name>
    <name type="ordered locus">PYRAB14940</name>
    <name type="ORF">PAB1379</name>
</gene>
<keyword id="KW-0974">Archaeal flagellum</keyword>
<accession>Q9UYL3</accession>
<accession>G8ZIR3</accession>
<feature type="propeptide" id="PRO_0000009401" evidence="1">
    <location>
        <begin position="1"/>
        <end position="5"/>
    </location>
</feature>
<feature type="chain" id="PRO_0000009402" description="Flagellin B4">
    <location>
        <begin position="6"/>
        <end position="219"/>
    </location>
</feature>
<reference key="1">
    <citation type="journal article" date="2003" name="Mol. Microbiol.">
        <title>An integrated analysis of the genome of the hyperthermophilic archaeon Pyrococcus abyssi.</title>
        <authorList>
            <person name="Cohen G.N."/>
            <person name="Barbe V."/>
            <person name="Flament D."/>
            <person name="Galperin M."/>
            <person name="Heilig R."/>
            <person name="Lecompte O."/>
            <person name="Poch O."/>
            <person name="Prieur D."/>
            <person name="Querellou J."/>
            <person name="Ripp R."/>
            <person name="Thierry J.-C."/>
            <person name="Van der Oost J."/>
            <person name="Weissenbach J."/>
            <person name="Zivanovic Y."/>
            <person name="Forterre P."/>
        </authorList>
    </citation>
    <scope>NUCLEOTIDE SEQUENCE [LARGE SCALE GENOMIC DNA]</scope>
    <source>
        <strain>GE5 / Orsay</strain>
    </source>
</reference>
<reference key="2">
    <citation type="journal article" date="2012" name="Curr. Microbiol.">
        <title>Re-annotation of two hyperthermophilic archaea Pyrococcus abyssi GE5 and Pyrococcus furiosus DSM 3638.</title>
        <authorList>
            <person name="Gao J."/>
            <person name="Wang J."/>
        </authorList>
    </citation>
    <scope>GENOME REANNOTATION</scope>
    <source>
        <strain>GE5 / Orsay</strain>
    </source>
</reference>
<organism>
    <name type="scientific">Pyrococcus abyssi (strain GE5 / Orsay)</name>
    <dbReference type="NCBI Taxonomy" id="272844"/>
    <lineage>
        <taxon>Archaea</taxon>
        <taxon>Methanobacteriati</taxon>
        <taxon>Methanobacteriota</taxon>
        <taxon>Thermococci</taxon>
        <taxon>Thermococcales</taxon>
        <taxon>Thermococcaceae</taxon>
        <taxon>Pyrococcus</taxon>
    </lineage>
</organism>
<comment type="function">
    <text>Flagellin is the subunit protein which polymerizes to form the filaments of archaeal flagella.</text>
</comment>
<comment type="subcellular location">
    <subcellularLocation>
        <location>Archaeal flagellum</location>
    </subcellularLocation>
</comment>
<comment type="similarity">
    <text evidence="2">Belongs to the archaeal flagellin family.</text>
</comment>
<name>FLAB4_PYRAB</name>
<dbReference type="EMBL" id="AJ248287">
    <property type="protein sequence ID" value="CAB50399.1"/>
    <property type="molecule type" value="Genomic_DNA"/>
</dbReference>
<dbReference type="EMBL" id="HE613800">
    <property type="protein sequence ID" value="CCE70946.1"/>
    <property type="molecule type" value="Genomic_DNA"/>
</dbReference>
<dbReference type="PIR" id="B75063">
    <property type="entry name" value="B75063"/>
</dbReference>
<dbReference type="RefSeq" id="WP_010868612.1">
    <property type="nucleotide sequence ID" value="NC_000868.1"/>
</dbReference>
<dbReference type="SMR" id="Q9UYL3"/>
<dbReference type="STRING" id="272844.PAB1379"/>
<dbReference type="KEGG" id="pab:PAB1379"/>
<dbReference type="PATRIC" id="fig|272844.11.peg.1592"/>
<dbReference type="eggNOG" id="arCOG01829">
    <property type="taxonomic scope" value="Archaea"/>
</dbReference>
<dbReference type="HOGENOM" id="CLU_051124_0_1_2"/>
<dbReference type="OrthoDB" id="102632at2157"/>
<dbReference type="PhylomeDB" id="Q9UYL3"/>
<dbReference type="Proteomes" id="UP000000810">
    <property type="component" value="Chromosome"/>
</dbReference>
<dbReference type="Proteomes" id="UP000009139">
    <property type="component" value="Chromosome"/>
</dbReference>
<dbReference type="GO" id="GO:0097589">
    <property type="term" value="C:archaeal-type flagellum"/>
    <property type="evidence" value="ECO:0007669"/>
    <property type="project" value="UniProtKB-SubCell"/>
</dbReference>
<dbReference type="GO" id="GO:0005198">
    <property type="term" value="F:structural molecule activity"/>
    <property type="evidence" value="ECO:0007669"/>
    <property type="project" value="InterPro"/>
</dbReference>
<dbReference type="GO" id="GO:0097588">
    <property type="term" value="P:archaeal or bacterial-type flagellum-dependent cell motility"/>
    <property type="evidence" value="ECO:0007669"/>
    <property type="project" value="InterPro"/>
</dbReference>
<dbReference type="InterPro" id="IPR013373">
    <property type="entry name" value="Flagellin/pilin_N_arc"/>
</dbReference>
<dbReference type="InterPro" id="IPR002774">
    <property type="entry name" value="Flagellin_arc"/>
</dbReference>
<dbReference type="NCBIfam" id="TIGR02537">
    <property type="entry name" value="arch_flag_Nterm"/>
    <property type="match status" value="1"/>
</dbReference>
<dbReference type="NCBIfam" id="NF006325">
    <property type="entry name" value="PRK08541.1"/>
    <property type="match status" value="1"/>
</dbReference>
<dbReference type="PANTHER" id="PTHR35903">
    <property type="entry name" value="FLAGELLIN B1"/>
    <property type="match status" value="1"/>
</dbReference>
<dbReference type="PANTHER" id="PTHR35903:SF1">
    <property type="entry name" value="FLAGELLIN B1"/>
    <property type="match status" value="1"/>
</dbReference>
<dbReference type="Pfam" id="PF01917">
    <property type="entry name" value="Arch_flagellin"/>
    <property type="match status" value="1"/>
</dbReference>
<protein>
    <recommendedName>
        <fullName>Flagellin B4</fullName>
    </recommendedName>
</protein>